<organism>
    <name type="scientific">Bacillus subtilis (strain 168)</name>
    <dbReference type="NCBI Taxonomy" id="224308"/>
    <lineage>
        <taxon>Bacteria</taxon>
        <taxon>Bacillati</taxon>
        <taxon>Bacillota</taxon>
        <taxon>Bacilli</taxon>
        <taxon>Bacillales</taxon>
        <taxon>Bacillaceae</taxon>
        <taxon>Bacillus</taxon>
    </lineage>
</organism>
<reference key="1">
    <citation type="journal article" date="1997" name="Microbiology">
        <title>Sequencing and functional annotation of the Bacillus subtilis genes in the 200 kb rrnB-dnaB region.</title>
        <authorList>
            <person name="Lapidus A."/>
            <person name="Galleron N."/>
            <person name="Sorokin A."/>
            <person name="Ehrlich S.D."/>
        </authorList>
    </citation>
    <scope>NUCLEOTIDE SEQUENCE [GENOMIC DNA]</scope>
    <source>
        <strain>168</strain>
    </source>
</reference>
<reference key="2">
    <citation type="journal article" date="1997" name="Nature">
        <title>The complete genome sequence of the Gram-positive bacterium Bacillus subtilis.</title>
        <authorList>
            <person name="Kunst F."/>
            <person name="Ogasawara N."/>
            <person name="Moszer I."/>
            <person name="Albertini A.M."/>
            <person name="Alloni G."/>
            <person name="Azevedo V."/>
            <person name="Bertero M.G."/>
            <person name="Bessieres P."/>
            <person name="Bolotin A."/>
            <person name="Borchert S."/>
            <person name="Borriss R."/>
            <person name="Boursier L."/>
            <person name="Brans A."/>
            <person name="Braun M."/>
            <person name="Brignell S.C."/>
            <person name="Bron S."/>
            <person name="Brouillet S."/>
            <person name="Bruschi C.V."/>
            <person name="Caldwell B."/>
            <person name="Capuano V."/>
            <person name="Carter N.M."/>
            <person name="Choi S.-K."/>
            <person name="Codani J.-J."/>
            <person name="Connerton I.F."/>
            <person name="Cummings N.J."/>
            <person name="Daniel R.A."/>
            <person name="Denizot F."/>
            <person name="Devine K.M."/>
            <person name="Duesterhoeft A."/>
            <person name="Ehrlich S.D."/>
            <person name="Emmerson P.T."/>
            <person name="Entian K.-D."/>
            <person name="Errington J."/>
            <person name="Fabret C."/>
            <person name="Ferrari E."/>
            <person name="Foulger D."/>
            <person name="Fritz C."/>
            <person name="Fujita M."/>
            <person name="Fujita Y."/>
            <person name="Fuma S."/>
            <person name="Galizzi A."/>
            <person name="Galleron N."/>
            <person name="Ghim S.-Y."/>
            <person name="Glaser P."/>
            <person name="Goffeau A."/>
            <person name="Golightly E.J."/>
            <person name="Grandi G."/>
            <person name="Guiseppi G."/>
            <person name="Guy B.J."/>
            <person name="Haga K."/>
            <person name="Haiech J."/>
            <person name="Harwood C.R."/>
            <person name="Henaut A."/>
            <person name="Hilbert H."/>
            <person name="Holsappel S."/>
            <person name="Hosono S."/>
            <person name="Hullo M.-F."/>
            <person name="Itaya M."/>
            <person name="Jones L.-M."/>
            <person name="Joris B."/>
            <person name="Karamata D."/>
            <person name="Kasahara Y."/>
            <person name="Klaerr-Blanchard M."/>
            <person name="Klein C."/>
            <person name="Kobayashi Y."/>
            <person name="Koetter P."/>
            <person name="Koningstein G."/>
            <person name="Krogh S."/>
            <person name="Kumano M."/>
            <person name="Kurita K."/>
            <person name="Lapidus A."/>
            <person name="Lardinois S."/>
            <person name="Lauber J."/>
            <person name="Lazarevic V."/>
            <person name="Lee S.-M."/>
            <person name="Levine A."/>
            <person name="Liu H."/>
            <person name="Masuda S."/>
            <person name="Mauel C."/>
            <person name="Medigue C."/>
            <person name="Medina N."/>
            <person name="Mellado R.P."/>
            <person name="Mizuno M."/>
            <person name="Moestl D."/>
            <person name="Nakai S."/>
            <person name="Noback M."/>
            <person name="Noone D."/>
            <person name="O'Reilly M."/>
            <person name="Ogawa K."/>
            <person name="Ogiwara A."/>
            <person name="Oudega B."/>
            <person name="Park S.-H."/>
            <person name="Parro V."/>
            <person name="Pohl T.M."/>
            <person name="Portetelle D."/>
            <person name="Porwollik S."/>
            <person name="Prescott A.M."/>
            <person name="Presecan E."/>
            <person name="Pujic P."/>
            <person name="Purnelle B."/>
            <person name="Rapoport G."/>
            <person name="Rey M."/>
            <person name="Reynolds S."/>
            <person name="Rieger M."/>
            <person name="Rivolta C."/>
            <person name="Rocha E."/>
            <person name="Roche B."/>
            <person name="Rose M."/>
            <person name="Sadaie Y."/>
            <person name="Sato T."/>
            <person name="Scanlan E."/>
            <person name="Schleich S."/>
            <person name="Schroeter R."/>
            <person name="Scoffone F."/>
            <person name="Sekiguchi J."/>
            <person name="Sekowska A."/>
            <person name="Seror S.J."/>
            <person name="Serror P."/>
            <person name="Shin B.-S."/>
            <person name="Soldo B."/>
            <person name="Sorokin A."/>
            <person name="Tacconi E."/>
            <person name="Takagi T."/>
            <person name="Takahashi H."/>
            <person name="Takemaru K."/>
            <person name="Takeuchi M."/>
            <person name="Tamakoshi A."/>
            <person name="Tanaka T."/>
            <person name="Terpstra P."/>
            <person name="Tognoni A."/>
            <person name="Tosato V."/>
            <person name="Uchiyama S."/>
            <person name="Vandenbol M."/>
            <person name="Vannier F."/>
            <person name="Vassarotti A."/>
            <person name="Viari A."/>
            <person name="Wambutt R."/>
            <person name="Wedler E."/>
            <person name="Wedler H."/>
            <person name="Weitzenegger T."/>
            <person name="Winters P."/>
            <person name="Wipat A."/>
            <person name="Yamamoto H."/>
            <person name="Yamane K."/>
            <person name="Yasumoto K."/>
            <person name="Yata K."/>
            <person name="Yoshida K."/>
            <person name="Yoshikawa H.-F."/>
            <person name="Zumstein E."/>
            <person name="Yoshikawa H."/>
            <person name="Danchin A."/>
        </authorList>
    </citation>
    <scope>NUCLEOTIDE SEQUENCE [LARGE SCALE GENOMIC DNA]</scope>
    <source>
        <strain>168</strain>
    </source>
</reference>
<feature type="chain" id="PRO_0000388336" description="Uncharacterized protein YtoI">
    <location>
        <begin position="1"/>
        <end position="439"/>
    </location>
</feature>
<feature type="domain" description="CBS 1" evidence="1">
    <location>
        <begin position="195"/>
        <end position="254"/>
    </location>
</feature>
<feature type="domain" description="CBS 2" evidence="1">
    <location>
        <begin position="256"/>
        <end position="314"/>
    </location>
</feature>
<dbReference type="EMBL" id="AF008220">
    <property type="protein sequence ID" value="AAC00336.1"/>
    <property type="molecule type" value="Genomic_DNA"/>
</dbReference>
<dbReference type="EMBL" id="AL009126">
    <property type="protein sequence ID" value="CAB14887.1"/>
    <property type="molecule type" value="Genomic_DNA"/>
</dbReference>
<dbReference type="PIR" id="A69998">
    <property type="entry name" value="A69998"/>
</dbReference>
<dbReference type="RefSeq" id="NP_390805.1">
    <property type="nucleotide sequence ID" value="NC_000964.3"/>
</dbReference>
<dbReference type="RefSeq" id="WP_004398641.1">
    <property type="nucleotide sequence ID" value="NZ_OZ025638.1"/>
</dbReference>
<dbReference type="SMR" id="O34921"/>
<dbReference type="FunCoup" id="O34921">
    <property type="interactions" value="74"/>
</dbReference>
<dbReference type="STRING" id="224308.BSU29270"/>
<dbReference type="PaxDb" id="224308-BSU29270"/>
<dbReference type="EnsemblBacteria" id="CAB14887">
    <property type="protein sequence ID" value="CAB14887"/>
    <property type="gene ID" value="BSU_29270"/>
</dbReference>
<dbReference type="GeneID" id="935941"/>
<dbReference type="KEGG" id="bsu:BSU29270"/>
<dbReference type="PATRIC" id="fig|224308.179.peg.3180"/>
<dbReference type="eggNOG" id="COG4109">
    <property type="taxonomic scope" value="Bacteria"/>
</dbReference>
<dbReference type="InParanoid" id="O34921"/>
<dbReference type="OrthoDB" id="1790451at2"/>
<dbReference type="PhylomeDB" id="O34921"/>
<dbReference type="BioCyc" id="BSUB:BSU29270-MONOMER"/>
<dbReference type="Proteomes" id="UP000001570">
    <property type="component" value="Chromosome"/>
</dbReference>
<dbReference type="CDD" id="cd04596">
    <property type="entry name" value="CBS_pair_DRTGG_assoc"/>
    <property type="match status" value="1"/>
</dbReference>
<dbReference type="CDD" id="cd03440">
    <property type="entry name" value="hot_dog"/>
    <property type="match status" value="1"/>
</dbReference>
<dbReference type="Gene3D" id="3.10.580.10">
    <property type="entry name" value="CBS-domain"/>
    <property type="match status" value="1"/>
</dbReference>
<dbReference type="Gene3D" id="3.10.129.10">
    <property type="entry name" value="Hotdog Thioesterase"/>
    <property type="match status" value="1"/>
</dbReference>
<dbReference type="Gene3D" id="3.40.1390.20">
    <property type="entry name" value="HprK N-terminal domain-like"/>
    <property type="match status" value="1"/>
</dbReference>
<dbReference type="Gene3D" id="1.10.10.10">
    <property type="entry name" value="Winged helix-like DNA-binding domain superfamily/Winged helix DNA-binding domain"/>
    <property type="match status" value="1"/>
</dbReference>
<dbReference type="InterPro" id="IPR000644">
    <property type="entry name" value="CBS_dom"/>
</dbReference>
<dbReference type="InterPro" id="IPR046342">
    <property type="entry name" value="CBS_dom_sf"/>
</dbReference>
<dbReference type="InterPro" id="IPR051257">
    <property type="entry name" value="Diverse_CBS-Domain"/>
</dbReference>
<dbReference type="InterPro" id="IPR010766">
    <property type="entry name" value="DRTGG"/>
</dbReference>
<dbReference type="InterPro" id="IPR029069">
    <property type="entry name" value="HotDog_dom_sf"/>
</dbReference>
<dbReference type="InterPro" id="IPR028979">
    <property type="entry name" value="Ser_kin/Pase_Hpr-like_N_sf"/>
</dbReference>
<dbReference type="InterPro" id="IPR006683">
    <property type="entry name" value="Thioestr_dom"/>
</dbReference>
<dbReference type="InterPro" id="IPR036388">
    <property type="entry name" value="WH-like_DNA-bd_sf"/>
</dbReference>
<dbReference type="InterPro" id="IPR036390">
    <property type="entry name" value="WH_DNA-bd_sf"/>
</dbReference>
<dbReference type="PANTHER" id="PTHR43080:SF2">
    <property type="entry name" value="CBS DOMAIN-CONTAINING PROTEIN"/>
    <property type="match status" value="1"/>
</dbReference>
<dbReference type="PANTHER" id="PTHR43080">
    <property type="entry name" value="CBS DOMAIN-CONTAINING PROTEIN CBSX3, MITOCHONDRIAL"/>
    <property type="match status" value="1"/>
</dbReference>
<dbReference type="Pfam" id="PF03061">
    <property type="entry name" value="4HBT"/>
    <property type="match status" value="1"/>
</dbReference>
<dbReference type="Pfam" id="PF00571">
    <property type="entry name" value="CBS"/>
    <property type="match status" value="2"/>
</dbReference>
<dbReference type="Pfam" id="PF07085">
    <property type="entry name" value="DRTGG"/>
    <property type="match status" value="1"/>
</dbReference>
<dbReference type="SMART" id="SM00116">
    <property type="entry name" value="CBS"/>
    <property type="match status" value="2"/>
</dbReference>
<dbReference type="SUPFAM" id="SSF54631">
    <property type="entry name" value="CBS-domain pair"/>
    <property type="match status" value="1"/>
</dbReference>
<dbReference type="SUPFAM" id="SSF75138">
    <property type="entry name" value="HprK N-terminal domain-like"/>
    <property type="match status" value="1"/>
</dbReference>
<dbReference type="SUPFAM" id="SSF54637">
    <property type="entry name" value="Thioesterase/thiol ester dehydrase-isomerase"/>
    <property type="match status" value="1"/>
</dbReference>
<dbReference type="SUPFAM" id="SSF46785">
    <property type="entry name" value="Winged helix' DNA-binding domain"/>
    <property type="match status" value="1"/>
</dbReference>
<dbReference type="PROSITE" id="PS51371">
    <property type="entry name" value="CBS"/>
    <property type="match status" value="2"/>
</dbReference>
<accession>O34921</accession>
<accession>Q795V0</accession>
<sequence>MATKHEQILTYIDSLPVGEKISVRRIAKEMKVSEGTAYRAIKEAENKGFVSTIERVGTIRIEQKKKENIEKLTYAEVVNVIDGQVLGGRAGLHKTLNKFVIGAMELDAMMRYTAAGNLLIVGNRINAHRQALEAGAAVLVTGGFNTDDSIVQLADELELPILSTSYDTFTVAAMINRAIYDQLIKKEIVLVEDILTPADRTVYLSPKDKLEKWYEKNFETGHGRFPVVDDQMKIHGILTSKDIAGHDRNASIEKVMTKNPVTVIGKTSVASAAQMMVWEGIEVLPVTDGHQKLIGMISRQDVLKALQMIQKQPQVGEKLDDIVSRGFKDEGDDKEDQTVYEYEVTPQMTNQLGTISYGVFTTILTQAANRFLRSKKRGELVIESITIFFLKPVQMESVIEVKPRILEAGRKFGKMEVEVHSQGHIVSKAMLMVQLMERS</sequence>
<keyword id="KW-0129">CBS domain</keyword>
<keyword id="KW-1185">Reference proteome</keyword>
<keyword id="KW-0677">Repeat</keyword>
<name>YTOI_BACSU</name>
<evidence type="ECO:0000255" key="1">
    <source>
        <dbReference type="PROSITE-ProRule" id="PRU00703"/>
    </source>
</evidence>
<proteinExistence type="predicted"/>
<gene>
    <name type="primary">ytoI</name>
    <name type="synonym">yodW</name>
    <name type="ordered locus">BSU29270</name>
</gene>
<protein>
    <recommendedName>
        <fullName>Uncharacterized protein YtoI</fullName>
    </recommendedName>
</protein>